<evidence type="ECO:0000255" key="1">
    <source>
        <dbReference type="HAMAP-Rule" id="MF_00218"/>
    </source>
</evidence>
<comment type="function">
    <text evidence="1">Catalyzes the decarboxylation of four acetate groups of uroporphyrinogen-III to yield coproporphyrinogen-III.</text>
</comment>
<comment type="catalytic activity">
    <reaction evidence="1">
        <text>uroporphyrinogen III + 4 H(+) = coproporphyrinogen III + 4 CO2</text>
        <dbReference type="Rhea" id="RHEA:19865"/>
        <dbReference type="ChEBI" id="CHEBI:15378"/>
        <dbReference type="ChEBI" id="CHEBI:16526"/>
        <dbReference type="ChEBI" id="CHEBI:57308"/>
        <dbReference type="ChEBI" id="CHEBI:57309"/>
        <dbReference type="EC" id="4.1.1.37"/>
    </reaction>
</comment>
<comment type="pathway">
    <text evidence="1">Porphyrin-containing compound metabolism; protoporphyrin-IX biosynthesis; coproporphyrinogen-III from 5-aminolevulinate: step 4/4.</text>
</comment>
<comment type="subunit">
    <text evidence="1">Homodimer.</text>
</comment>
<comment type="subcellular location">
    <subcellularLocation>
        <location evidence="1">Cytoplasm</location>
    </subcellularLocation>
</comment>
<comment type="similarity">
    <text evidence="1">Belongs to the uroporphyrinogen decarboxylase family.</text>
</comment>
<sequence>MVRTINETFLKACRGERTDYVPAWYMRQAGRSQPEYRKIKEKYSLFEITHNPELCAYVTKLPVDQYNVDAAILYKDIMSPLPAIGVDVEIKSGIGPVIDNPIRSLQDVEKLGEINPEDDVPYILDTIRLLTTEMLDVPLIGFSGAPFTLASYMIEGGPSRNYHNTKAFMYAEPKAWFALMDKLADMVITYLKAQINAGAKAVQIFDSWVGTVNVADYRVFIKPAMERIFAEVRTMGVPMIMHGVGAAHLVNEWHDLPLDVVGLDWRLPIEEARARGVHKAVQGNMDPSFLLAPWSVIEEHVKGILDQGMKQPGYIFNLGHGVFPEVNPDTLKRLTTFIHEYSKGQLAK</sequence>
<keyword id="KW-0963">Cytoplasm</keyword>
<keyword id="KW-0210">Decarboxylase</keyword>
<keyword id="KW-0456">Lyase</keyword>
<keyword id="KW-0627">Porphyrin biosynthesis</keyword>
<gene>
    <name evidence="1" type="primary">hemE</name>
    <name type="ordered locus">BCAH187_A1230</name>
</gene>
<name>DCUP_BACC7</name>
<dbReference type="EC" id="4.1.1.37" evidence="1"/>
<dbReference type="EMBL" id="CP001177">
    <property type="protein sequence ID" value="ACJ79037.1"/>
    <property type="molecule type" value="Genomic_DNA"/>
</dbReference>
<dbReference type="SMR" id="B7HZJ8"/>
<dbReference type="KEGG" id="bcr:BCAH187_A1230"/>
<dbReference type="HOGENOM" id="CLU_040933_0_1_9"/>
<dbReference type="UniPathway" id="UPA00251">
    <property type="reaction ID" value="UER00321"/>
</dbReference>
<dbReference type="Proteomes" id="UP000002214">
    <property type="component" value="Chromosome"/>
</dbReference>
<dbReference type="GO" id="GO:0005829">
    <property type="term" value="C:cytosol"/>
    <property type="evidence" value="ECO:0007669"/>
    <property type="project" value="TreeGrafter"/>
</dbReference>
<dbReference type="GO" id="GO:0004853">
    <property type="term" value="F:uroporphyrinogen decarboxylase activity"/>
    <property type="evidence" value="ECO:0007669"/>
    <property type="project" value="UniProtKB-UniRule"/>
</dbReference>
<dbReference type="GO" id="GO:0006782">
    <property type="term" value="P:protoporphyrinogen IX biosynthetic process"/>
    <property type="evidence" value="ECO:0007669"/>
    <property type="project" value="UniProtKB-UniRule"/>
</dbReference>
<dbReference type="CDD" id="cd00717">
    <property type="entry name" value="URO-D"/>
    <property type="match status" value="1"/>
</dbReference>
<dbReference type="FunFam" id="3.20.20.210:FF:000005">
    <property type="entry name" value="Uroporphyrinogen decarboxylase"/>
    <property type="match status" value="1"/>
</dbReference>
<dbReference type="Gene3D" id="3.20.20.210">
    <property type="match status" value="1"/>
</dbReference>
<dbReference type="HAMAP" id="MF_00218">
    <property type="entry name" value="URO_D"/>
    <property type="match status" value="1"/>
</dbReference>
<dbReference type="InterPro" id="IPR038071">
    <property type="entry name" value="UROD/MetE-like_sf"/>
</dbReference>
<dbReference type="InterPro" id="IPR006361">
    <property type="entry name" value="Uroporphyrinogen_deCO2ase_HemE"/>
</dbReference>
<dbReference type="InterPro" id="IPR000257">
    <property type="entry name" value="Uroporphyrinogen_deCOase"/>
</dbReference>
<dbReference type="NCBIfam" id="TIGR01464">
    <property type="entry name" value="hemE"/>
    <property type="match status" value="1"/>
</dbReference>
<dbReference type="PANTHER" id="PTHR21091">
    <property type="entry name" value="METHYLTETRAHYDROFOLATE:HOMOCYSTEINE METHYLTRANSFERASE RELATED"/>
    <property type="match status" value="1"/>
</dbReference>
<dbReference type="PANTHER" id="PTHR21091:SF169">
    <property type="entry name" value="UROPORPHYRINOGEN DECARBOXYLASE"/>
    <property type="match status" value="1"/>
</dbReference>
<dbReference type="Pfam" id="PF01208">
    <property type="entry name" value="URO-D"/>
    <property type="match status" value="1"/>
</dbReference>
<dbReference type="SUPFAM" id="SSF51726">
    <property type="entry name" value="UROD/MetE-like"/>
    <property type="match status" value="1"/>
</dbReference>
<dbReference type="PROSITE" id="PS00906">
    <property type="entry name" value="UROD_1"/>
    <property type="match status" value="1"/>
</dbReference>
<dbReference type="PROSITE" id="PS00907">
    <property type="entry name" value="UROD_2"/>
    <property type="match status" value="1"/>
</dbReference>
<accession>B7HZJ8</accession>
<reference key="1">
    <citation type="submission" date="2008-10" db="EMBL/GenBank/DDBJ databases">
        <title>Genome sequence of Bacillus cereus AH187.</title>
        <authorList>
            <person name="Dodson R.J."/>
            <person name="Durkin A.S."/>
            <person name="Rosovitz M.J."/>
            <person name="Rasko D.A."/>
            <person name="Kolsto A.B."/>
            <person name="Okstad O.A."/>
            <person name="Ravel J."/>
            <person name="Sutton G."/>
        </authorList>
    </citation>
    <scope>NUCLEOTIDE SEQUENCE [LARGE SCALE GENOMIC DNA]</scope>
    <source>
        <strain>AH187</strain>
    </source>
</reference>
<organism>
    <name type="scientific">Bacillus cereus (strain AH187)</name>
    <dbReference type="NCBI Taxonomy" id="405534"/>
    <lineage>
        <taxon>Bacteria</taxon>
        <taxon>Bacillati</taxon>
        <taxon>Bacillota</taxon>
        <taxon>Bacilli</taxon>
        <taxon>Bacillales</taxon>
        <taxon>Bacillaceae</taxon>
        <taxon>Bacillus</taxon>
        <taxon>Bacillus cereus group</taxon>
    </lineage>
</organism>
<protein>
    <recommendedName>
        <fullName evidence="1">Uroporphyrinogen decarboxylase</fullName>
        <shortName evidence="1">UPD</shortName>
        <shortName evidence="1">URO-D</shortName>
        <ecNumber evidence="1">4.1.1.37</ecNumber>
    </recommendedName>
</protein>
<feature type="chain" id="PRO_1000197507" description="Uroporphyrinogen decarboxylase">
    <location>
        <begin position="1"/>
        <end position="348"/>
    </location>
</feature>
<feature type="binding site" evidence="1">
    <location>
        <begin position="27"/>
        <end position="31"/>
    </location>
    <ligand>
        <name>substrate</name>
    </ligand>
</feature>
<feature type="binding site" evidence="1">
    <location>
        <position position="46"/>
    </location>
    <ligand>
        <name>substrate</name>
    </ligand>
</feature>
<feature type="binding site" evidence="1">
    <location>
        <position position="76"/>
    </location>
    <ligand>
        <name>substrate</name>
    </ligand>
</feature>
<feature type="binding site" evidence="1">
    <location>
        <position position="152"/>
    </location>
    <ligand>
        <name>substrate</name>
    </ligand>
</feature>
<feature type="binding site" evidence="1">
    <location>
        <position position="207"/>
    </location>
    <ligand>
        <name>substrate</name>
    </ligand>
</feature>
<feature type="binding site" evidence="1">
    <location>
        <position position="320"/>
    </location>
    <ligand>
        <name>substrate</name>
    </ligand>
</feature>
<feature type="site" description="Transition state stabilizer" evidence="1">
    <location>
        <position position="76"/>
    </location>
</feature>
<proteinExistence type="inferred from homology"/>